<organism>
    <name type="scientific">Streptococcus agalactiae serotype III (strain NEM316)</name>
    <dbReference type="NCBI Taxonomy" id="211110"/>
    <lineage>
        <taxon>Bacteria</taxon>
        <taxon>Bacillati</taxon>
        <taxon>Bacillota</taxon>
        <taxon>Bacilli</taxon>
        <taxon>Lactobacillales</taxon>
        <taxon>Streptococcaceae</taxon>
        <taxon>Streptococcus</taxon>
    </lineage>
</organism>
<evidence type="ECO:0000255" key="1">
    <source>
        <dbReference type="HAMAP-Rule" id="MF_01595"/>
    </source>
</evidence>
<dbReference type="EC" id="2.7.7.8" evidence="1"/>
<dbReference type="EMBL" id="AL766844">
    <property type="protein sequence ID" value="CAD45843.1"/>
    <property type="molecule type" value="Genomic_DNA"/>
</dbReference>
<dbReference type="RefSeq" id="WP_000043857.1">
    <property type="nucleotide sequence ID" value="NC_004368.1"/>
</dbReference>
<dbReference type="SMR" id="Q8E7F6"/>
<dbReference type="KEGG" id="san:pnpA"/>
<dbReference type="eggNOG" id="COG1185">
    <property type="taxonomic scope" value="Bacteria"/>
</dbReference>
<dbReference type="HOGENOM" id="CLU_004217_2_2_9"/>
<dbReference type="Proteomes" id="UP000000823">
    <property type="component" value="Chromosome"/>
</dbReference>
<dbReference type="GO" id="GO:0005829">
    <property type="term" value="C:cytosol"/>
    <property type="evidence" value="ECO:0007669"/>
    <property type="project" value="TreeGrafter"/>
</dbReference>
<dbReference type="GO" id="GO:0000175">
    <property type="term" value="F:3'-5'-RNA exonuclease activity"/>
    <property type="evidence" value="ECO:0007669"/>
    <property type="project" value="TreeGrafter"/>
</dbReference>
<dbReference type="GO" id="GO:0000287">
    <property type="term" value="F:magnesium ion binding"/>
    <property type="evidence" value="ECO:0007669"/>
    <property type="project" value="UniProtKB-UniRule"/>
</dbReference>
<dbReference type="GO" id="GO:0004654">
    <property type="term" value="F:polyribonucleotide nucleotidyltransferase activity"/>
    <property type="evidence" value="ECO:0007669"/>
    <property type="project" value="UniProtKB-UniRule"/>
</dbReference>
<dbReference type="GO" id="GO:0003723">
    <property type="term" value="F:RNA binding"/>
    <property type="evidence" value="ECO:0007669"/>
    <property type="project" value="UniProtKB-UniRule"/>
</dbReference>
<dbReference type="GO" id="GO:0006402">
    <property type="term" value="P:mRNA catabolic process"/>
    <property type="evidence" value="ECO:0007669"/>
    <property type="project" value="UniProtKB-UniRule"/>
</dbReference>
<dbReference type="GO" id="GO:0006396">
    <property type="term" value="P:RNA processing"/>
    <property type="evidence" value="ECO:0007669"/>
    <property type="project" value="InterPro"/>
</dbReference>
<dbReference type="CDD" id="cd02393">
    <property type="entry name" value="KH-I_PNPase"/>
    <property type="match status" value="1"/>
</dbReference>
<dbReference type="CDD" id="cd11363">
    <property type="entry name" value="RNase_PH_PNPase_1"/>
    <property type="match status" value="1"/>
</dbReference>
<dbReference type="CDD" id="cd11364">
    <property type="entry name" value="RNase_PH_PNPase_2"/>
    <property type="match status" value="1"/>
</dbReference>
<dbReference type="FunFam" id="2.40.50.140:FF:000023">
    <property type="entry name" value="Polyribonucleotide nucleotidyltransferase"/>
    <property type="match status" value="1"/>
</dbReference>
<dbReference type="FunFam" id="3.30.1370.10:FF:000001">
    <property type="entry name" value="Polyribonucleotide nucleotidyltransferase"/>
    <property type="match status" value="1"/>
</dbReference>
<dbReference type="FunFam" id="3.30.230.70:FF:000001">
    <property type="entry name" value="Polyribonucleotide nucleotidyltransferase"/>
    <property type="match status" value="1"/>
</dbReference>
<dbReference type="FunFam" id="3.30.230.70:FF:000002">
    <property type="entry name" value="Polyribonucleotide nucleotidyltransferase"/>
    <property type="match status" value="1"/>
</dbReference>
<dbReference type="Gene3D" id="3.30.230.70">
    <property type="entry name" value="GHMP Kinase, N-terminal domain"/>
    <property type="match status" value="2"/>
</dbReference>
<dbReference type="Gene3D" id="3.30.1370.10">
    <property type="entry name" value="K Homology domain, type 1"/>
    <property type="match status" value="1"/>
</dbReference>
<dbReference type="Gene3D" id="2.40.50.140">
    <property type="entry name" value="Nucleic acid-binding proteins"/>
    <property type="match status" value="1"/>
</dbReference>
<dbReference type="HAMAP" id="MF_01595">
    <property type="entry name" value="PNPase"/>
    <property type="match status" value="1"/>
</dbReference>
<dbReference type="InterPro" id="IPR001247">
    <property type="entry name" value="ExoRNase_PH_dom1"/>
</dbReference>
<dbReference type="InterPro" id="IPR015847">
    <property type="entry name" value="ExoRNase_PH_dom2"/>
</dbReference>
<dbReference type="InterPro" id="IPR036345">
    <property type="entry name" value="ExoRNase_PH_dom2_sf"/>
</dbReference>
<dbReference type="InterPro" id="IPR004087">
    <property type="entry name" value="KH_dom"/>
</dbReference>
<dbReference type="InterPro" id="IPR004088">
    <property type="entry name" value="KH_dom_type_1"/>
</dbReference>
<dbReference type="InterPro" id="IPR036612">
    <property type="entry name" value="KH_dom_type_1_sf"/>
</dbReference>
<dbReference type="InterPro" id="IPR012340">
    <property type="entry name" value="NA-bd_OB-fold"/>
</dbReference>
<dbReference type="InterPro" id="IPR012162">
    <property type="entry name" value="PNPase"/>
</dbReference>
<dbReference type="InterPro" id="IPR027408">
    <property type="entry name" value="PNPase/RNase_PH_dom_sf"/>
</dbReference>
<dbReference type="InterPro" id="IPR015848">
    <property type="entry name" value="PNPase_PH_RNA-bd_bac/org-type"/>
</dbReference>
<dbReference type="InterPro" id="IPR036456">
    <property type="entry name" value="PNPase_PH_RNA-bd_sf"/>
</dbReference>
<dbReference type="InterPro" id="IPR020568">
    <property type="entry name" value="Ribosomal_Su5_D2-typ_SF"/>
</dbReference>
<dbReference type="InterPro" id="IPR003029">
    <property type="entry name" value="S1_domain"/>
</dbReference>
<dbReference type="NCBIfam" id="TIGR03591">
    <property type="entry name" value="polynuc_phos"/>
    <property type="match status" value="1"/>
</dbReference>
<dbReference type="NCBIfam" id="NF008805">
    <property type="entry name" value="PRK11824.1"/>
    <property type="match status" value="1"/>
</dbReference>
<dbReference type="PANTHER" id="PTHR11252">
    <property type="entry name" value="POLYRIBONUCLEOTIDE NUCLEOTIDYLTRANSFERASE"/>
    <property type="match status" value="1"/>
</dbReference>
<dbReference type="PANTHER" id="PTHR11252:SF0">
    <property type="entry name" value="POLYRIBONUCLEOTIDE NUCLEOTIDYLTRANSFERASE 1, MITOCHONDRIAL"/>
    <property type="match status" value="1"/>
</dbReference>
<dbReference type="Pfam" id="PF00013">
    <property type="entry name" value="KH_1"/>
    <property type="match status" value="1"/>
</dbReference>
<dbReference type="Pfam" id="PF03726">
    <property type="entry name" value="PNPase"/>
    <property type="match status" value="1"/>
</dbReference>
<dbReference type="Pfam" id="PF01138">
    <property type="entry name" value="RNase_PH"/>
    <property type="match status" value="2"/>
</dbReference>
<dbReference type="Pfam" id="PF03725">
    <property type="entry name" value="RNase_PH_C"/>
    <property type="match status" value="2"/>
</dbReference>
<dbReference type="Pfam" id="PF00575">
    <property type="entry name" value="S1"/>
    <property type="match status" value="1"/>
</dbReference>
<dbReference type="PIRSF" id="PIRSF005499">
    <property type="entry name" value="PNPase"/>
    <property type="match status" value="1"/>
</dbReference>
<dbReference type="SMART" id="SM00322">
    <property type="entry name" value="KH"/>
    <property type="match status" value="1"/>
</dbReference>
<dbReference type="SMART" id="SM00316">
    <property type="entry name" value="S1"/>
    <property type="match status" value="1"/>
</dbReference>
<dbReference type="SUPFAM" id="SSF54791">
    <property type="entry name" value="Eukaryotic type KH-domain (KH-domain type I)"/>
    <property type="match status" value="1"/>
</dbReference>
<dbReference type="SUPFAM" id="SSF50249">
    <property type="entry name" value="Nucleic acid-binding proteins"/>
    <property type="match status" value="1"/>
</dbReference>
<dbReference type="SUPFAM" id="SSF46915">
    <property type="entry name" value="Polynucleotide phosphorylase/guanosine pentaphosphate synthase (PNPase/GPSI), domain 3"/>
    <property type="match status" value="1"/>
</dbReference>
<dbReference type="SUPFAM" id="SSF55666">
    <property type="entry name" value="Ribonuclease PH domain 2-like"/>
    <property type="match status" value="2"/>
</dbReference>
<dbReference type="SUPFAM" id="SSF54211">
    <property type="entry name" value="Ribosomal protein S5 domain 2-like"/>
    <property type="match status" value="2"/>
</dbReference>
<dbReference type="PROSITE" id="PS50084">
    <property type="entry name" value="KH_TYPE_1"/>
    <property type="match status" value="1"/>
</dbReference>
<dbReference type="PROSITE" id="PS50126">
    <property type="entry name" value="S1"/>
    <property type="match status" value="1"/>
</dbReference>
<reference key="1">
    <citation type="journal article" date="2002" name="Mol. Microbiol.">
        <title>Genome sequence of Streptococcus agalactiae, a pathogen causing invasive neonatal disease.</title>
        <authorList>
            <person name="Glaser P."/>
            <person name="Rusniok C."/>
            <person name="Buchrieser C."/>
            <person name="Chevalier F."/>
            <person name="Frangeul L."/>
            <person name="Msadek T."/>
            <person name="Zouine M."/>
            <person name="Couve E."/>
            <person name="Lalioui L."/>
            <person name="Poyart C."/>
            <person name="Trieu-Cuot P."/>
            <person name="Kunst F."/>
        </authorList>
    </citation>
    <scope>NUCLEOTIDE SEQUENCE [LARGE SCALE GENOMIC DNA]</scope>
    <source>
        <strain>NEM316</strain>
    </source>
</reference>
<feature type="chain" id="PRO_0000329865" description="Polyribonucleotide nucleotidyltransferase">
    <location>
        <begin position="1"/>
        <end position="709"/>
    </location>
</feature>
<feature type="domain" description="KH" evidence="1">
    <location>
        <begin position="556"/>
        <end position="615"/>
    </location>
</feature>
<feature type="domain" description="S1 motif" evidence="1">
    <location>
        <begin position="625"/>
        <end position="693"/>
    </location>
</feature>
<feature type="binding site" evidence="1">
    <location>
        <position position="489"/>
    </location>
    <ligand>
        <name>Mg(2+)</name>
        <dbReference type="ChEBI" id="CHEBI:18420"/>
    </ligand>
</feature>
<feature type="binding site" evidence="1">
    <location>
        <position position="495"/>
    </location>
    <ligand>
        <name>Mg(2+)</name>
        <dbReference type="ChEBI" id="CHEBI:18420"/>
    </ligand>
</feature>
<accession>Q8E7F6</accession>
<proteinExistence type="inferred from homology"/>
<name>PNP_STRA3</name>
<protein>
    <recommendedName>
        <fullName evidence="1">Polyribonucleotide nucleotidyltransferase</fullName>
        <ecNumber evidence="1">2.7.7.8</ecNumber>
    </recommendedName>
    <alternativeName>
        <fullName evidence="1">Polynucleotide phosphorylase</fullName>
        <shortName evidence="1">PNPase</shortName>
    </alternativeName>
</protein>
<gene>
    <name evidence="1" type="primary">pnp</name>
    <name type="ordered locus">gbs0198</name>
</gene>
<keyword id="KW-0963">Cytoplasm</keyword>
<keyword id="KW-0460">Magnesium</keyword>
<keyword id="KW-0479">Metal-binding</keyword>
<keyword id="KW-0548">Nucleotidyltransferase</keyword>
<keyword id="KW-0694">RNA-binding</keyword>
<keyword id="KW-0808">Transferase</keyword>
<comment type="function">
    <text evidence="1">Involved in mRNA degradation. Catalyzes the phosphorolysis of single-stranded polyribonucleotides processively in the 3'- to 5'-direction.</text>
</comment>
<comment type="catalytic activity">
    <reaction evidence="1">
        <text>RNA(n+1) + phosphate = RNA(n) + a ribonucleoside 5'-diphosphate</text>
        <dbReference type="Rhea" id="RHEA:22096"/>
        <dbReference type="Rhea" id="RHEA-COMP:14527"/>
        <dbReference type="Rhea" id="RHEA-COMP:17342"/>
        <dbReference type="ChEBI" id="CHEBI:43474"/>
        <dbReference type="ChEBI" id="CHEBI:57930"/>
        <dbReference type="ChEBI" id="CHEBI:140395"/>
        <dbReference type="EC" id="2.7.7.8"/>
    </reaction>
</comment>
<comment type="cofactor">
    <cofactor evidence="1">
        <name>Mg(2+)</name>
        <dbReference type="ChEBI" id="CHEBI:18420"/>
    </cofactor>
</comment>
<comment type="subcellular location">
    <subcellularLocation>
        <location evidence="1">Cytoplasm</location>
    </subcellularLocation>
</comment>
<comment type="similarity">
    <text evidence="1">Belongs to the polyribonucleotide nucleotidyltransferase family.</text>
</comment>
<sequence length="709" mass="77166">MSKQVFEMIFAGKKLVVETGQVAKQANGSVVVRYGDSTVLTAAVMSKKMSTGDFFPLQVNYEEKMYAAGKFPGGFNKREGRPSTDATLTARLIDRPIRPMFAEGFRNEVQVINTVLSFDENASAPMAAMFGSSLALSISDIPFNGPIAGVQVAYVDGNFIINPTAQEQEASALELTVAGTKEAINMVESGAKELSEEIMLEALLKGHEAVCELIAFQEEIVTAIGKEKAEVELLQVDPELQAEIIATHNIALQAAVQVEEKKAREAATEAVKEVVIGEYEARYAEHEEYDRIMRDVAEILEQMEHAEVRRLITEDKVRPDGRRVDEIRPLDAVIDFLPQVHGSGLFTRGQTQALSVLTLAPMGEAQIIDGLTPEYKKRFMHHYNFPQYSVGETGRYGAAGRREIGHGALGERALEQVLPSLEEFPYAIRLVAEVLESNGSSSQASICAGTLALMAGGVPIKAPVAGIAMGLISDGTNYTVLTDIQGLEDHFGDMDFKVAGTREGITALQMDIKIEGITPQILEEALAQAKKARFEILDVLHGAIAEPRPQLAPTAPKIDMIKIDVDKIKVVIGKGGETIDKIIAETGVKIDIDEEGNVSIFSSDQAAIDRTKDIIASLVREAKVGEVYHAKVVRIEKFGAFVNLFDKTDALVHISEIAWTRTANVADVLEIGEEVDVKVIKIDDKGRVDASMKALLPRPPKADNPKKES</sequence>